<keyword id="KW-0067">ATP-binding</keyword>
<keyword id="KW-0997">Cell inner membrane</keyword>
<keyword id="KW-1003">Cell membrane</keyword>
<keyword id="KW-0963">Cytoplasm</keyword>
<keyword id="KW-0472">Membrane</keyword>
<keyword id="KW-0479">Metal-binding</keyword>
<keyword id="KW-0547">Nucleotide-binding</keyword>
<keyword id="KW-0653">Protein transport</keyword>
<keyword id="KW-1278">Translocase</keyword>
<keyword id="KW-0811">Translocation</keyword>
<keyword id="KW-0813">Transport</keyword>
<keyword id="KW-0862">Zinc</keyword>
<accession>Q47AB4</accession>
<dbReference type="EC" id="7.4.2.8" evidence="1"/>
<dbReference type="EMBL" id="CP000089">
    <property type="protein sequence ID" value="AAZ48217.1"/>
    <property type="molecule type" value="Genomic_DNA"/>
</dbReference>
<dbReference type="SMR" id="Q47AB4"/>
<dbReference type="STRING" id="159087.Daro_3488"/>
<dbReference type="KEGG" id="dar:Daro_3488"/>
<dbReference type="eggNOG" id="COG0653">
    <property type="taxonomic scope" value="Bacteria"/>
</dbReference>
<dbReference type="HOGENOM" id="CLU_005314_3_0_4"/>
<dbReference type="OrthoDB" id="9805579at2"/>
<dbReference type="GO" id="GO:0031522">
    <property type="term" value="C:cell envelope Sec protein transport complex"/>
    <property type="evidence" value="ECO:0007669"/>
    <property type="project" value="TreeGrafter"/>
</dbReference>
<dbReference type="GO" id="GO:0005829">
    <property type="term" value="C:cytosol"/>
    <property type="evidence" value="ECO:0007669"/>
    <property type="project" value="TreeGrafter"/>
</dbReference>
<dbReference type="GO" id="GO:0005886">
    <property type="term" value="C:plasma membrane"/>
    <property type="evidence" value="ECO:0007669"/>
    <property type="project" value="UniProtKB-SubCell"/>
</dbReference>
<dbReference type="GO" id="GO:0005524">
    <property type="term" value="F:ATP binding"/>
    <property type="evidence" value="ECO:0007669"/>
    <property type="project" value="UniProtKB-UniRule"/>
</dbReference>
<dbReference type="GO" id="GO:0046872">
    <property type="term" value="F:metal ion binding"/>
    <property type="evidence" value="ECO:0007669"/>
    <property type="project" value="UniProtKB-KW"/>
</dbReference>
<dbReference type="GO" id="GO:0008564">
    <property type="term" value="F:protein-exporting ATPase activity"/>
    <property type="evidence" value="ECO:0007669"/>
    <property type="project" value="UniProtKB-EC"/>
</dbReference>
<dbReference type="GO" id="GO:0065002">
    <property type="term" value="P:intracellular protein transmembrane transport"/>
    <property type="evidence" value="ECO:0007669"/>
    <property type="project" value="UniProtKB-UniRule"/>
</dbReference>
<dbReference type="GO" id="GO:0017038">
    <property type="term" value="P:protein import"/>
    <property type="evidence" value="ECO:0007669"/>
    <property type="project" value="InterPro"/>
</dbReference>
<dbReference type="GO" id="GO:0006605">
    <property type="term" value="P:protein targeting"/>
    <property type="evidence" value="ECO:0007669"/>
    <property type="project" value="UniProtKB-UniRule"/>
</dbReference>
<dbReference type="GO" id="GO:0043952">
    <property type="term" value="P:protein transport by the Sec complex"/>
    <property type="evidence" value="ECO:0007669"/>
    <property type="project" value="TreeGrafter"/>
</dbReference>
<dbReference type="CDD" id="cd17928">
    <property type="entry name" value="DEXDc_SecA"/>
    <property type="match status" value="1"/>
</dbReference>
<dbReference type="CDD" id="cd18803">
    <property type="entry name" value="SF2_C_secA"/>
    <property type="match status" value="1"/>
</dbReference>
<dbReference type="FunFam" id="3.40.50.300:FF:000113">
    <property type="entry name" value="Preprotein translocase subunit SecA"/>
    <property type="match status" value="1"/>
</dbReference>
<dbReference type="FunFam" id="3.90.1440.10:FF:000001">
    <property type="entry name" value="Preprotein translocase subunit SecA"/>
    <property type="match status" value="1"/>
</dbReference>
<dbReference type="FunFam" id="1.10.3060.10:FF:000003">
    <property type="entry name" value="Protein translocase subunit SecA"/>
    <property type="match status" value="1"/>
</dbReference>
<dbReference type="FunFam" id="3.40.50.300:FF:000334">
    <property type="entry name" value="Protein translocase subunit SecA"/>
    <property type="match status" value="1"/>
</dbReference>
<dbReference type="Gene3D" id="1.10.3060.10">
    <property type="entry name" value="Helical scaffold and wing domains of SecA"/>
    <property type="match status" value="1"/>
</dbReference>
<dbReference type="Gene3D" id="3.40.50.300">
    <property type="entry name" value="P-loop containing nucleotide triphosphate hydrolases"/>
    <property type="match status" value="2"/>
</dbReference>
<dbReference type="Gene3D" id="3.90.1440.10">
    <property type="entry name" value="SecA, preprotein cross-linking domain"/>
    <property type="match status" value="1"/>
</dbReference>
<dbReference type="HAMAP" id="MF_01382">
    <property type="entry name" value="SecA"/>
    <property type="match status" value="1"/>
</dbReference>
<dbReference type="InterPro" id="IPR014001">
    <property type="entry name" value="Helicase_ATP-bd"/>
</dbReference>
<dbReference type="InterPro" id="IPR001650">
    <property type="entry name" value="Helicase_C-like"/>
</dbReference>
<dbReference type="InterPro" id="IPR027417">
    <property type="entry name" value="P-loop_NTPase"/>
</dbReference>
<dbReference type="InterPro" id="IPR004027">
    <property type="entry name" value="SEC_C_motif"/>
</dbReference>
<dbReference type="InterPro" id="IPR000185">
    <property type="entry name" value="SecA"/>
</dbReference>
<dbReference type="InterPro" id="IPR020937">
    <property type="entry name" value="SecA_CS"/>
</dbReference>
<dbReference type="InterPro" id="IPR011115">
    <property type="entry name" value="SecA_DEAD"/>
</dbReference>
<dbReference type="InterPro" id="IPR014018">
    <property type="entry name" value="SecA_motor_DEAD"/>
</dbReference>
<dbReference type="InterPro" id="IPR011130">
    <property type="entry name" value="SecA_preprotein_X-link_dom"/>
</dbReference>
<dbReference type="InterPro" id="IPR044722">
    <property type="entry name" value="SecA_SF2_C"/>
</dbReference>
<dbReference type="InterPro" id="IPR011116">
    <property type="entry name" value="SecA_Wing/Scaffold"/>
</dbReference>
<dbReference type="InterPro" id="IPR036266">
    <property type="entry name" value="SecA_Wing/Scaffold_sf"/>
</dbReference>
<dbReference type="InterPro" id="IPR036670">
    <property type="entry name" value="SecA_X-link_sf"/>
</dbReference>
<dbReference type="NCBIfam" id="NF009538">
    <property type="entry name" value="PRK12904.1"/>
    <property type="match status" value="1"/>
</dbReference>
<dbReference type="NCBIfam" id="TIGR00963">
    <property type="entry name" value="secA"/>
    <property type="match status" value="1"/>
</dbReference>
<dbReference type="PANTHER" id="PTHR30612:SF0">
    <property type="entry name" value="CHLOROPLAST PROTEIN-TRANSPORTING ATPASE"/>
    <property type="match status" value="1"/>
</dbReference>
<dbReference type="PANTHER" id="PTHR30612">
    <property type="entry name" value="SECA INNER MEMBRANE COMPONENT OF SEC PROTEIN SECRETION SYSTEM"/>
    <property type="match status" value="1"/>
</dbReference>
<dbReference type="Pfam" id="PF21090">
    <property type="entry name" value="P-loop_SecA"/>
    <property type="match status" value="1"/>
</dbReference>
<dbReference type="Pfam" id="PF02810">
    <property type="entry name" value="SEC-C"/>
    <property type="match status" value="1"/>
</dbReference>
<dbReference type="Pfam" id="PF07517">
    <property type="entry name" value="SecA_DEAD"/>
    <property type="match status" value="1"/>
</dbReference>
<dbReference type="Pfam" id="PF01043">
    <property type="entry name" value="SecA_PP_bind"/>
    <property type="match status" value="1"/>
</dbReference>
<dbReference type="Pfam" id="PF07516">
    <property type="entry name" value="SecA_SW"/>
    <property type="match status" value="1"/>
</dbReference>
<dbReference type="PRINTS" id="PR00906">
    <property type="entry name" value="SECA"/>
</dbReference>
<dbReference type="SMART" id="SM00957">
    <property type="entry name" value="SecA_DEAD"/>
    <property type="match status" value="1"/>
</dbReference>
<dbReference type="SMART" id="SM00958">
    <property type="entry name" value="SecA_PP_bind"/>
    <property type="match status" value="1"/>
</dbReference>
<dbReference type="SUPFAM" id="SSF81886">
    <property type="entry name" value="Helical scaffold and wing domains of SecA"/>
    <property type="match status" value="1"/>
</dbReference>
<dbReference type="SUPFAM" id="SSF52540">
    <property type="entry name" value="P-loop containing nucleoside triphosphate hydrolases"/>
    <property type="match status" value="2"/>
</dbReference>
<dbReference type="SUPFAM" id="SSF81767">
    <property type="entry name" value="Pre-protein crosslinking domain of SecA"/>
    <property type="match status" value="1"/>
</dbReference>
<dbReference type="PROSITE" id="PS01312">
    <property type="entry name" value="SECA"/>
    <property type="match status" value="1"/>
</dbReference>
<dbReference type="PROSITE" id="PS51196">
    <property type="entry name" value="SECA_MOTOR_DEAD"/>
    <property type="match status" value="1"/>
</dbReference>
<name>SECA_DECAR</name>
<proteinExistence type="inferred from homology"/>
<protein>
    <recommendedName>
        <fullName evidence="1">Protein translocase subunit SecA</fullName>
        <ecNumber evidence="1">7.4.2.8</ecNumber>
    </recommendedName>
</protein>
<feature type="chain" id="PRO_0000318347" description="Protein translocase subunit SecA">
    <location>
        <begin position="1"/>
        <end position="904"/>
    </location>
</feature>
<feature type="region of interest" description="Disordered" evidence="2">
    <location>
        <begin position="865"/>
        <end position="887"/>
    </location>
</feature>
<feature type="compositionally biased region" description="Low complexity" evidence="2">
    <location>
        <begin position="868"/>
        <end position="880"/>
    </location>
</feature>
<feature type="binding site" evidence="1">
    <location>
        <position position="87"/>
    </location>
    <ligand>
        <name>ATP</name>
        <dbReference type="ChEBI" id="CHEBI:30616"/>
    </ligand>
</feature>
<feature type="binding site" evidence="1">
    <location>
        <begin position="105"/>
        <end position="109"/>
    </location>
    <ligand>
        <name>ATP</name>
        <dbReference type="ChEBI" id="CHEBI:30616"/>
    </ligand>
</feature>
<feature type="binding site" evidence="1">
    <location>
        <position position="507"/>
    </location>
    <ligand>
        <name>ATP</name>
        <dbReference type="ChEBI" id="CHEBI:30616"/>
    </ligand>
</feature>
<feature type="binding site" evidence="1">
    <location>
        <position position="888"/>
    </location>
    <ligand>
        <name>Zn(2+)</name>
        <dbReference type="ChEBI" id="CHEBI:29105"/>
    </ligand>
</feature>
<feature type="binding site" evidence="1">
    <location>
        <position position="890"/>
    </location>
    <ligand>
        <name>Zn(2+)</name>
        <dbReference type="ChEBI" id="CHEBI:29105"/>
    </ligand>
</feature>
<feature type="binding site" evidence="1">
    <location>
        <position position="899"/>
    </location>
    <ligand>
        <name>Zn(2+)</name>
        <dbReference type="ChEBI" id="CHEBI:29105"/>
    </ligand>
</feature>
<feature type="binding site" evidence="1">
    <location>
        <position position="900"/>
    </location>
    <ligand>
        <name>Zn(2+)</name>
        <dbReference type="ChEBI" id="CHEBI:29105"/>
    </ligand>
</feature>
<organism>
    <name type="scientific">Dechloromonas aromatica (strain RCB)</name>
    <dbReference type="NCBI Taxonomy" id="159087"/>
    <lineage>
        <taxon>Bacteria</taxon>
        <taxon>Pseudomonadati</taxon>
        <taxon>Pseudomonadota</taxon>
        <taxon>Betaproteobacteria</taxon>
        <taxon>Rhodocyclales</taxon>
        <taxon>Azonexaceae</taxon>
        <taxon>Dechloromonas</taxon>
    </lineage>
</organism>
<gene>
    <name evidence="1" type="primary">secA</name>
    <name type="ordered locus">Daro_3488</name>
</gene>
<reference key="1">
    <citation type="journal article" date="2009" name="BMC Genomics">
        <title>Metabolic analysis of the soil microbe Dechloromonas aromatica str. RCB: indications of a surprisingly complex life-style and cryptic anaerobic pathways for aromatic degradation.</title>
        <authorList>
            <person name="Salinero K.K."/>
            <person name="Keller K."/>
            <person name="Feil W.S."/>
            <person name="Feil H."/>
            <person name="Trong S."/>
            <person name="Di Bartolo G."/>
            <person name="Lapidus A."/>
        </authorList>
    </citation>
    <scope>NUCLEOTIDE SEQUENCE [LARGE SCALE GENOMIC DNA]</scope>
    <source>
        <strain>RCB</strain>
    </source>
</reference>
<sequence length="904" mass="101552">MISGLLKKIFGSRNDRLIKQYSQNVKRINALEPAMQALSDEQLRAKTDEFRQRHANGESLDDLLPEAFAVVREAGQRALGMRHFDVQMIGGMVLHDGKIAEMRTGEGKTLVGTLPAYLNAISGKGVHVITVNDYLATRDSDWMGRLHRFLGLTVGVNLSQMDHEAKQAAYAADITYGTNNEFGFDYLRDNMVYTAGERVQRSLNFAIVDEVDSILIDEARTPLIISGQAEDHTDLYLRMKDVVPNLTRAMEEKDEGDYWVDEKGHQVHLSETGYEHAEQLLAEYGLLKEGTSLYDAANITLMHHLNAALRGMTLFHKDQHYVVQNGEVVIVDEFTGRLMAGRRWSDGLHQAVEAKEGVQIQAENQTLASITFQNYFRMYNKLAGMTGTADTEAYEFHQIYGLETVVIPTHRPMVRKDMNDLVYKTADEKHAAIIADIKDCAKRGQPVLVGTTSIEASELLSGLLDKESLPHQVLNAKQHAREAEIVVQAGRPGMVTIATNMAGRGTDIVLGGNIEKQLAAIRDDESLPVEEREQKAAAMKAEWQEVHNAVLASGGLHIIGSERHESRRIDNQLRGRAGRQGDAGSSRFYLSLDDPLLRIFAGERLRAIMDKLKMPEGEAIEHPLVTRSLESAQRKVEARNFDIRKQLLEYDDVSNDQRKVIYQQRNELLETDDISETITAMRQSVIAETFRTYVPAESVEEQWDMEGLERALASDLQIIAPVAQWFKDEPTLSDEEILERITKNADEAYQAKIDLVGDGTFHQFERNVMLQSLDSHWREHLAALDHLRQGIHLRGYAQKNPKQEYKREAFELFEGLLDLVRREVTRVVFTVQIRTPEDVEETAPHAEVQNVQYQHAGYDEALGEGEGAEAAGQQPADAGPKIGRNDPCPCGSGKKYKHCHGKLS</sequence>
<evidence type="ECO:0000255" key="1">
    <source>
        <dbReference type="HAMAP-Rule" id="MF_01382"/>
    </source>
</evidence>
<evidence type="ECO:0000256" key="2">
    <source>
        <dbReference type="SAM" id="MobiDB-lite"/>
    </source>
</evidence>
<comment type="function">
    <text evidence="1">Part of the Sec protein translocase complex. Interacts with the SecYEG preprotein conducting channel. Has a central role in coupling the hydrolysis of ATP to the transfer of proteins into and across the cell membrane, serving both as a receptor for the preprotein-SecB complex and as an ATP-driven molecular motor driving the stepwise translocation of polypeptide chains across the membrane.</text>
</comment>
<comment type="catalytic activity">
    <reaction evidence="1">
        <text>ATP + H2O + cellular proteinSide 1 = ADP + phosphate + cellular proteinSide 2.</text>
        <dbReference type="EC" id="7.4.2.8"/>
    </reaction>
</comment>
<comment type="cofactor">
    <cofactor evidence="1">
        <name>Zn(2+)</name>
        <dbReference type="ChEBI" id="CHEBI:29105"/>
    </cofactor>
    <text evidence="1">May bind 1 zinc ion per subunit.</text>
</comment>
<comment type="subunit">
    <text evidence="1">Monomer and homodimer. Part of the essential Sec protein translocation apparatus which comprises SecA, SecYEG and auxiliary proteins SecDF-YajC and YidC.</text>
</comment>
<comment type="subcellular location">
    <subcellularLocation>
        <location evidence="1">Cell inner membrane</location>
        <topology evidence="1">Peripheral membrane protein</topology>
        <orientation evidence="1">Cytoplasmic side</orientation>
    </subcellularLocation>
    <subcellularLocation>
        <location evidence="1">Cytoplasm</location>
    </subcellularLocation>
    <text evidence="1">Distribution is 50-50.</text>
</comment>
<comment type="similarity">
    <text evidence="1">Belongs to the SecA family.</text>
</comment>